<gene>
    <name evidence="1" type="primary">clpX</name>
    <name type="ordered locus">YPA_2651</name>
</gene>
<accession>Q1C4K9</accession>
<dbReference type="EMBL" id="CP000308">
    <property type="protein sequence ID" value="ABG14613.1"/>
    <property type="molecule type" value="Genomic_DNA"/>
</dbReference>
<dbReference type="RefSeq" id="WP_002208641.1">
    <property type="nucleotide sequence ID" value="NZ_CP009906.1"/>
</dbReference>
<dbReference type="SMR" id="Q1C4K9"/>
<dbReference type="GeneID" id="96664466"/>
<dbReference type="KEGG" id="ypa:YPA_2651"/>
<dbReference type="Proteomes" id="UP000001971">
    <property type="component" value="Chromosome"/>
</dbReference>
<dbReference type="GO" id="GO:0009376">
    <property type="term" value="C:HslUV protease complex"/>
    <property type="evidence" value="ECO:0007669"/>
    <property type="project" value="TreeGrafter"/>
</dbReference>
<dbReference type="GO" id="GO:0005524">
    <property type="term" value="F:ATP binding"/>
    <property type="evidence" value="ECO:0007669"/>
    <property type="project" value="UniProtKB-UniRule"/>
</dbReference>
<dbReference type="GO" id="GO:0016887">
    <property type="term" value="F:ATP hydrolysis activity"/>
    <property type="evidence" value="ECO:0007669"/>
    <property type="project" value="InterPro"/>
</dbReference>
<dbReference type="GO" id="GO:0140662">
    <property type="term" value="F:ATP-dependent protein folding chaperone"/>
    <property type="evidence" value="ECO:0007669"/>
    <property type="project" value="InterPro"/>
</dbReference>
<dbReference type="GO" id="GO:0046983">
    <property type="term" value="F:protein dimerization activity"/>
    <property type="evidence" value="ECO:0007669"/>
    <property type="project" value="InterPro"/>
</dbReference>
<dbReference type="GO" id="GO:0051082">
    <property type="term" value="F:unfolded protein binding"/>
    <property type="evidence" value="ECO:0007669"/>
    <property type="project" value="UniProtKB-UniRule"/>
</dbReference>
<dbReference type="GO" id="GO:0008270">
    <property type="term" value="F:zinc ion binding"/>
    <property type="evidence" value="ECO:0007669"/>
    <property type="project" value="InterPro"/>
</dbReference>
<dbReference type="GO" id="GO:0051301">
    <property type="term" value="P:cell division"/>
    <property type="evidence" value="ECO:0007669"/>
    <property type="project" value="TreeGrafter"/>
</dbReference>
<dbReference type="GO" id="GO:0051603">
    <property type="term" value="P:proteolysis involved in protein catabolic process"/>
    <property type="evidence" value="ECO:0007669"/>
    <property type="project" value="TreeGrafter"/>
</dbReference>
<dbReference type="CDD" id="cd19497">
    <property type="entry name" value="RecA-like_ClpX"/>
    <property type="match status" value="1"/>
</dbReference>
<dbReference type="FunFam" id="1.10.8.60:FF:000002">
    <property type="entry name" value="ATP-dependent Clp protease ATP-binding subunit ClpX"/>
    <property type="match status" value="1"/>
</dbReference>
<dbReference type="FunFam" id="3.40.50.300:FF:000005">
    <property type="entry name" value="ATP-dependent Clp protease ATP-binding subunit ClpX"/>
    <property type="match status" value="1"/>
</dbReference>
<dbReference type="Gene3D" id="1.10.8.60">
    <property type="match status" value="1"/>
</dbReference>
<dbReference type="Gene3D" id="6.20.220.10">
    <property type="entry name" value="ClpX chaperone, C4-type zinc finger domain"/>
    <property type="match status" value="1"/>
</dbReference>
<dbReference type="Gene3D" id="3.40.50.300">
    <property type="entry name" value="P-loop containing nucleotide triphosphate hydrolases"/>
    <property type="match status" value="1"/>
</dbReference>
<dbReference type="HAMAP" id="MF_00175">
    <property type="entry name" value="ClpX"/>
    <property type="match status" value="1"/>
</dbReference>
<dbReference type="InterPro" id="IPR003593">
    <property type="entry name" value="AAA+_ATPase"/>
</dbReference>
<dbReference type="InterPro" id="IPR050052">
    <property type="entry name" value="ATP-dep_Clp_protease_ClpX"/>
</dbReference>
<dbReference type="InterPro" id="IPR003959">
    <property type="entry name" value="ATPase_AAA_core"/>
</dbReference>
<dbReference type="InterPro" id="IPR019489">
    <property type="entry name" value="Clp_ATPase_C"/>
</dbReference>
<dbReference type="InterPro" id="IPR004487">
    <property type="entry name" value="Clp_protease_ATP-bd_su_ClpX"/>
</dbReference>
<dbReference type="InterPro" id="IPR046425">
    <property type="entry name" value="ClpX_bact"/>
</dbReference>
<dbReference type="InterPro" id="IPR027417">
    <property type="entry name" value="P-loop_NTPase"/>
</dbReference>
<dbReference type="InterPro" id="IPR010603">
    <property type="entry name" value="Znf_CppX_C4"/>
</dbReference>
<dbReference type="InterPro" id="IPR038366">
    <property type="entry name" value="Znf_CppX_C4_sf"/>
</dbReference>
<dbReference type="NCBIfam" id="TIGR00382">
    <property type="entry name" value="clpX"/>
    <property type="match status" value="1"/>
</dbReference>
<dbReference type="NCBIfam" id="NF003745">
    <property type="entry name" value="PRK05342.1"/>
    <property type="match status" value="1"/>
</dbReference>
<dbReference type="PANTHER" id="PTHR48102:SF7">
    <property type="entry name" value="ATP-DEPENDENT CLP PROTEASE ATP-BINDING SUBUNIT CLPX-LIKE, MITOCHONDRIAL"/>
    <property type="match status" value="1"/>
</dbReference>
<dbReference type="PANTHER" id="PTHR48102">
    <property type="entry name" value="ATP-DEPENDENT CLP PROTEASE ATP-BINDING SUBUNIT CLPX-LIKE, MITOCHONDRIAL-RELATED"/>
    <property type="match status" value="1"/>
</dbReference>
<dbReference type="Pfam" id="PF07724">
    <property type="entry name" value="AAA_2"/>
    <property type="match status" value="1"/>
</dbReference>
<dbReference type="Pfam" id="PF10431">
    <property type="entry name" value="ClpB_D2-small"/>
    <property type="match status" value="1"/>
</dbReference>
<dbReference type="Pfam" id="PF06689">
    <property type="entry name" value="zf-C4_ClpX"/>
    <property type="match status" value="1"/>
</dbReference>
<dbReference type="SMART" id="SM00382">
    <property type="entry name" value="AAA"/>
    <property type="match status" value="1"/>
</dbReference>
<dbReference type="SMART" id="SM01086">
    <property type="entry name" value="ClpB_D2-small"/>
    <property type="match status" value="1"/>
</dbReference>
<dbReference type="SMART" id="SM00994">
    <property type="entry name" value="zf-C4_ClpX"/>
    <property type="match status" value="1"/>
</dbReference>
<dbReference type="SUPFAM" id="SSF57716">
    <property type="entry name" value="Glucocorticoid receptor-like (DNA-binding domain)"/>
    <property type="match status" value="1"/>
</dbReference>
<dbReference type="SUPFAM" id="SSF52540">
    <property type="entry name" value="P-loop containing nucleoside triphosphate hydrolases"/>
    <property type="match status" value="1"/>
</dbReference>
<dbReference type="PROSITE" id="PS51902">
    <property type="entry name" value="CLPX_ZB"/>
    <property type="match status" value="1"/>
</dbReference>
<proteinExistence type="inferred from homology"/>
<evidence type="ECO:0000255" key="1">
    <source>
        <dbReference type="HAMAP-Rule" id="MF_00175"/>
    </source>
</evidence>
<evidence type="ECO:0000255" key="2">
    <source>
        <dbReference type="PROSITE-ProRule" id="PRU01250"/>
    </source>
</evidence>
<name>CLPX_YERPA</name>
<protein>
    <recommendedName>
        <fullName evidence="1">ATP-dependent Clp protease ATP-binding subunit ClpX</fullName>
    </recommendedName>
</protein>
<organism>
    <name type="scientific">Yersinia pestis bv. Antiqua (strain Antiqua)</name>
    <dbReference type="NCBI Taxonomy" id="360102"/>
    <lineage>
        <taxon>Bacteria</taxon>
        <taxon>Pseudomonadati</taxon>
        <taxon>Pseudomonadota</taxon>
        <taxon>Gammaproteobacteria</taxon>
        <taxon>Enterobacterales</taxon>
        <taxon>Yersiniaceae</taxon>
        <taxon>Yersinia</taxon>
    </lineage>
</organism>
<keyword id="KW-0067">ATP-binding</keyword>
<keyword id="KW-0143">Chaperone</keyword>
<keyword id="KW-0479">Metal-binding</keyword>
<keyword id="KW-0547">Nucleotide-binding</keyword>
<keyword id="KW-0862">Zinc</keyword>
<sequence length="423" mass="46033">MTDKRKDGSGKLLYCSFCGKSQHEVRKLIAGPSVYICDECVDLCNDIIREEIKEVSPHRDRSSLPTPHEIRHHLDDYVIGQEPAKKVLAVAVYNHYKRLRNGDTSNGIELGKSNILLIGPTGSGKTLLAETLARLLDVPFTMADATTLTEAGYVGEDVENIIQKLLQKCDYDVQKAQRGIVYIDEIDKISRKSDNPSITRDVSGEGVQQALLKLIEGTIAAVPPQGGRKHPQQEFLQVDTSKILFICGGAFAGLDKVIGQRINTGSGIGFGAVVKGQSEKATEGELLSQVEPEDLIKFGLIPEFIGRLPVVATLSELSEDALIQILKEPKNALTKQYQALFSLEGVELEFRDEALTAIAKKAMARKTGARGLRSIVEGALLDTMYDLPSMDSVEKVVVDESVIAGQSAPMLIYGQPEAQASGE</sequence>
<reference key="1">
    <citation type="journal article" date="2006" name="J. Bacteriol.">
        <title>Complete genome sequence of Yersinia pestis strains Antiqua and Nepal516: evidence of gene reduction in an emerging pathogen.</title>
        <authorList>
            <person name="Chain P.S.G."/>
            <person name="Hu P."/>
            <person name="Malfatti S.A."/>
            <person name="Radnedge L."/>
            <person name="Larimer F."/>
            <person name="Vergez L.M."/>
            <person name="Worsham P."/>
            <person name="Chu M.C."/>
            <person name="Andersen G.L."/>
        </authorList>
    </citation>
    <scope>NUCLEOTIDE SEQUENCE [LARGE SCALE GENOMIC DNA]</scope>
    <source>
        <strain>Antiqua</strain>
    </source>
</reference>
<comment type="function">
    <text evidence="1">ATP-dependent specificity component of the Clp protease. It directs the protease to specific substrates. Can perform chaperone functions in the absence of ClpP.</text>
</comment>
<comment type="subunit">
    <text evidence="1">Component of the ClpX-ClpP complex. Forms a hexameric ring that, in the presence of ATP, binds to fourteen ClpP subunits assembled into a disk-like structure with a central cavity, resembling the structure of eukaryotic proteasomes.</text>
</comment>
<comment type="similarity">
    <text evidence="1">Belongs to the ClpX chaperone family.</text>
</comment>
<feature type="chain" id="PRO_1000024705" description="ATP-dependent Clp protease ATP-binding subunit ClpX">
    <location>
        <begin position="1"/>
        <end position="423"/>
    </location>
</feature>
<feature type="domain" description="ClpX-type ZB" evidence="2">
    <location>
        <begin position="2"/>
        <end position="56"/>
    </location>
</feature>
<feature type="binding site" evidence="2">
    <location>
        <position position="15"/>
    </location>
    <ligand>
        <name>Zn(2+)</name>
        <dbReference type="ChEBI" id="CHEBI:29105"/>
    </ligand>
</feature>
<feature type="binding site" evidence="2">
    <location>
        <position position="18"/>
    </location>
    <ligand>
        <name>Zn(2+)</name>
        <dbReference type="ChEBI" id="CHEBI:29105"/>
    </ligand>
</feature>
<feature type="binding site" evidence="2">
    <location>
        <position position="37"/>
    </location>
    <ligand>
        <name>Zn(2+)</name>
        <dbReference type="ChEBI" id="CHEBI:29105"/>
    </ligand>
</feature>
<feature type="binding site" evidence="2">
    <location>
        <position position="40"/>
    </location>
    <ligand>
        <name>Zn(2+)</name>
        <dbReference type="ChEBI" id="CHEBI:29105"/>
    </ligand>
</feature>
<feature type="binding site" evidence="1">
    <location>
        <begin position="120"/>
        <end position="127"/>
    </location>
    <ligand>
        <name>ATP</name>
        <dbReference type="ChEBI" id="CHEBI:30616"/>
    </ligand>
</feature>